<name>PLSX_ECODH</name>
<gene>
    <name evidence="1" type="primary">plsX</name>
    <name type="ordered locus">ECDH10B_1162</name>
</gene>
<sequence length="356" mass="38214">MTRLTLALDVMGGDFGPSVTVPAALQALNSNSQLTLLLVGNSDAITPLLAKADFEQRSRLQIIPAQSVIASDARPSQAIRASRGSSMRVALELVKEGRAQACVSAGNTGALMGLAKLLLKPLEGIERPALVTVLPHQQKGKTVVLDLGANVDCDSTMLVQFAIMGSVLAEEVVEIPNPRVALLNIGEEEVKGLDSIRDASAVLKTIPSINYIGYLEANELLTGKTDVLVCDGFTGNVTLKTMEGVVRMFLSLLKSQGEGKKRSWWLLLLKRWLQKSLTRRFSHLNPDQYNGACLLGLRGTVIKSHGAANQRAFAVAIEQAVQAVQRQVPQRIAARLESVYPAGFELLDGGKSGTLR</sequence>
<organism>
    <name type="scientific">Escherichia coli (strain K12 / DH10B)</name>
    <dbReference type="NCBI Taxonomy" id="316385"/>
    <lineage>
        <taxon>Bacteria</taxon>
        <taxon>Pseudomonadati</taxon>
        <taxon>Pseudomonadota</taxon>
        <taxon>Gammaproteobacteria</taxon>
        <taxon>Enterobacterales</taxon>
        <taxon>Enterobacteriaceae</taxon>
        <taxon>Escherichia</taxon>
    </lineage>
</organism>
<proteinExistence type="inferred from homology"/>
<feature type="chain" id="PRO_1000089903" description="Phosphate acyltransferase">
    <location>
        <begin position="1"/>
        <end position="356"/>
    </location>
</feature>
<evidence type="ECO:0000255" key="1">
    <source>
        <dbReference type="HAMAP-Rule" id="MF_00019"/>
    </source>
</evidence>
<comment type="function">
    <text evidence="1">Catalyzes the reversible formation of acyl-phosphate (acyl-PO(4)) from acyl-[acyl-carrier-protein] (acyl-ACP). This enzyme utilizes acyl-ACP as fatty acyl donor, but not acyl-CoA.</text>
</comment>
<comment type="catalytic activity">
    <reaction evidence="1">
        <text>a fatty acyl-[ACP] + phosphate = an acyl phosphate + holo-[ACP]</text>
        <dbReference type="Rhea" id="RHEA:42292"/>
        <dbReference type="Rhea" id="RHEA-COMP:9685"/>
        <dbReference type="Rhea" id="RHEA-COMP:14125"/>
        <dbReference type="ChEBI" id="CHEBI:43474"/>
        <dbReference type="ChEBI" id="CHEBI:59918"/>
        <dbReference type="ChEBI" id="CHEBI:64479"/>
        <dbReference type="ChEBI" id="CHEBI:138651"/>
        <dbReference type="EC" id="2.3.1.274"/>
    </reaction>
</comment>
<comment type="pathway">
    <text evidence="1">Lipid metabolism; phospholipid metabolism.</text>
</comment>
<comment type="subunit">
    <text evidence="1">Homodimer. Probably interacts with PlsY.</text>
</comment>
<comment type="subcellular location">
    <subcellularLocation>
        <location evidence="1">Cytoplasm</location>
    </subcellularLocation>
    <text evidence="1">Associated with the membrane possibly through PlsY.</text>
</comment>
<comment type="similarity">
    <text evidence="1">Belongs to the PlsX family.</text>
</comment>
<keyword id="KW-0963">Cytoplasm</keyword>
<keyword id="KW-0444">Lipid biosynthesis</keyword>
<keyword id="KW-0443">Lipid metabolism</keyword>
<keyword id="KW-0594">Phospholipid biosynthesis</keyword>
<keyword id="KW-1208">Phospholipid metabolism</keyword>
<keyword id="KW-0808">Transferase</keyword>
<dbReference type="EC" id="2.3.1.274" evidence="1"/>
<dbReference type="EMBL" id="CP000948">
    <property type="protein sequence ID" value="ACB02283.1"/>
    <property type="molecule type" value="Genomic_DNA"/>
</dbReference>
<dbReference type="RefSeq" id="WP_000197597.1">
    <property type="nucleotide sequence ID" value="NC_010473.1"/>
</dbReference>
<dbReference type="SMR" id="B1XA00"/>
<dbReference type="KEGG" id="ecd:ECDH10B_1162"/>
<dbReference type="HOGENOM" id="CLU_039379_1_0_6"/>
<dbReference type="UniPathway" id="UPA00085"/>
<dbReference type="GO" id="GO:0005737">
    <property type="term" value="C:cytoplasm"/>
    <property type="evidence" value="ECO:0007669"/>
    <property type="project" value="UniProtKB-SubCell"/>
</dbReference>
<dbReference type="GO" id="GO:0043811">
    <property type="term" value="F:phosphate:acyl-[acyl carrier protein] acyltransferase activity"/>
    <property type="evidence" value="ECO:0007669"/>
    <property type="project" value="UniProtKB-UniRule"/>
</dbReference>
<dbReference type="GO" id="GO:0006633">
    <property type="term" value="P:fatty acid biosynthetic process"/>
    <property type="evidence" value="ECO:0007669"/>
    <property type="project" value="UniProtKB-UniRule"/>
</dbReference>
<dbReference type="GO" id="GO:0008654">
    <property type="term" value="P:phospholipid biosynthetic process"/>
    <property type="evidence" value="ECO:0007669"/>
    <property type="project" value="UniProtKB-KW"/>
</dbReference>
<dbReference type="FunFam" id="3.40.718.10:FF:000008">
    <property type="entry name" value="Phosphate acyltransferase"/>
    <property type="match status" value="1"/>
</dbReference>
<dbReference type="Gene3D" id="3.40.718.10">
    <property type="entry name" value="Isopropylmalate Dehydrogenase"/>
    <property type="match status" value="1"/>
</dbReference>
<dbReference type="HAMAP" id="MF_00019">
    <property type="entry name" value="PlsX"/>
    <property type="match status" value="1"/>
</dbReference>
<dbReference type="InterPro" id="IPR003664">
    <property type="entry name" value="FA_synthesis"/>
</dbReference>
<dbReference type="InterPro" id="IPR012281">
    <property type="entry name" value="Phospholipid_synth_PlsX-like"/>
</dbReference>
<dbReference type="NCBIfam" id="TIGR00182">
    <property type="entry name" value="plsX"/>
    <property type="match status" value="1"/>
</dbReference>
<dbReference type="PANTHER" id="PTHR30100">
    <property type="entry name" value="FATTY ACID/PHOSPHOLIPID SYNTHESIS PROTEIN PLSX"/>
    <property type="match status" value="1"/>
</dbReference>
<dbReference type="PANTHER" id="PTHR30100:SF1">
    <property type="entry name" value="PHOSPHATE ACYLTRANSFERASE"/>
    <property type="match status" value="1"/>
</dbReference>
<dbReference type="Pfam" id="PF02504">
    <property type="entry name" value="FA_synthesis"/>
    <property type="match status" value="1"/>
</dbReference>
<dbReference type="PIRSF" id="PIRSF002465">
    <property type="entry name" value="Phsphlp_syn_PlsX"/>
    <property type="match status" value="1"/>
</dbReference>
<dbReference type="SUPFAM" id="SSF53659">
    <property type="entry name" value="Isocitrate/Isopropylmalate dehydrogenase-like"/>
    <property type="match status" value="1"/>
</dbReference>
<protein>
    <recommendedName>
        <fullName evidence="1">Phosphate acyltransferase</fullName>
        <ecNumber evidence="1">2.3.1.274</ecNumber>
    </recommendedName>
    <alternativeName>
        <fullName evidence="1">Acyl-ACP phosphotransacylase</fullName>
    </alternativeName>
    <alternativeName>
        <fullName evidence="1">Acyl-[acyl-carrier-protein]--phosphate acyltransferase</fullName>
    </alternativeName>
    <alternativeName>
        <fullName evidence="1">Phosphate-acyl-ACP acyltransferase</fullName>
    </alternativeName>
</protein>
<reference key="1">
    <citation type="journal article" date="2008" name="J. Bacteriol.">
        <title>The complete genome sequence of Escherichia coli DH10B: insights into the biology of a laboratory workhorse.</title>
        <authorList>
            <person name="Durfee T."/>
            <person name="Nelson R."/>
            <person name="Baldwin S."/>
            <person name="Plunkett G. III"/>
            <person name="Burland V."/>
            <person name="Mau B."/>
            <person name="Petrosino J.F."/>
            <person name="Qin X."/>
            <person name="Muzny D.M."/>
            <person name="Ayele M."/>
            <person name="Gibbs R.A."/>
            <person name="Csorgo B."/>
            <person name="Posfai G."/>
            <person name="Weinstock G.M."/>
            <person name="Blattner F.R."/>
        </authorList>
    </citation>
    <scope>NUCLEOTIDE SEQUENCE [LARGE SCALE GENOMIC DNA]</scope>
    <source>
        <strain>K12 / DH10B</strain>
    </source>
</reference>
<accession>B1XA00</accession>